<accession>A9KTZ3</accession>
<proteinExistence type="inferred from homology"/>
<feature type="chain" id="PRO_1000100332" description="CinA-like protein">
    <location>
        <begin position="1"/>
        <end position="424"/>
    </location>
</feature>
<sequence length="424" mass="46148">MKLEMICTGEEVLAGQIVDTNAAWFASTMMEHGVEIQRRVTVGDRLEDLIAVFQERSLHADIILVNGGLGPTSDDMSALAMAKAKGEPLVENVEWRERLEEWFTRNNREMPLSNLKQAMLPASAVMVDNPVGTACGFRVKLNRAWLFFTPGVPFELKHMVTEQFVPFIRDEFNLDSKVALKKLLTIGQGESALADKLEPLELPEGITIGYRSSMPHIEIKIFARGEKAIAVLPRVAGHIKMVLGTAVVAEDKATLAEEIHYKLLNSGLTLSVAESCTGGMITSQLVDFSGSSSYLQHGLVTYSNESKVRVLGVNPSTLDDHGAVSIATVEEMAKGARQILDSDYALATSGIAGPDGGTDEKPVGTVAIALATRGGVYSQMIKLPRRSRDLVRSLSAAVAYDMLRRELLAEAVIVDYQSIGRFSK</sequence>
<organism>
    <name type="scientific">Shewanella baltica (strain OS195)</name>
    <dbReference type="NCBI Taxonomy" id="399599"/>
    <lineage>
        <taxon>Bacteria</taxon>
        <taxon>Pseudomonadati</taxon>
        <taxon>Pseudomonadota</taxon>
        <taxon>Gammaproteobacteria</taxon>
        <taxon>Alteromonadales</taxon>
        <taxon>Shewanellaceae</taxon>
        <taxon>Shewanella</taxon>
    </lineage>
</organism>
<dbReference type="EMBL" id="CP000891">
    <property type="protein sequence ID" value="ABX51374.1"/>
    <property type="molecule type" value="Genomic_DNA"/>
</dbReference>
<dbReference type="RefSeq" id="WP_012197757.1">
    <property type="nucleotide sequence ID" value="NC_009997.1"/>
</dbReference>
<dbReference type="SMR" id="A9KTZ3"/>
<dbReference type="KEGG" id="sbn:Sbal195_4216"/>
<dbReference type="HOGENOM" id="CLU_030805_9_2_6"/>
<dbReference type="Proteomes" id="UP000000770">
    <property type="component" value="Chromosome"/>
</dbReference>
<dbReference type="CDD" id="cd00885">
    <property type="entry name" value="cinA"/>
    <property type="match status" value="1"/>
</dbReference>
<dbReference type="Gene3D" id="3.30.70.2860">
    <property type="match status" value="1"/>
</dbReference>
<dbReference type="Gene3D" id="3.90.950.20">
    <property type="entry name" value="CinA-like"/>
    <property type="match status" value="1"/>
</dbReference>
<dbReference type="Gene3D" id="3.40.980.10">
    <property type="entry name" value="MoaB/Mog-like domain"/>
    <property type="match status" value="1"/>
</dbReference>
<dbReference type="HAMAP" id="MF_00226_B">
    <property type="entry name" value="CinA_B"/>
    <property type="match status" value="1"/>
</dbReference>
<dbReference type="InterPro" id="IPR050101">
    <property type="entry name" value="CinA"/>
</dbReference>
<dbReference type="InterPro" id="IPR036653">
    <property type="entry name" value="CinA-like_C"/>
</dbReference>
<dbReference type="InterPro" id="IPR008136">
    <property type="entry name" value="CinA_C"/>
</dbReference>
<dbReference type="InterPro" id="IPR008135">
    <property type="entry name" value="Competence-induced_CinA"/>
</dbReference>
<dbReference type="InterPro" id="IPR036425">
    <property type="entry name" value="MoaB/Mog-like_dom_sf"/>
</dbReference>
<dbReference type="InterPro" id="IPR001453">
    <property type="entry name" value="MoaB/Mog_dom"/>
</dbReference>
<dbReference type="NCBIfam" id="TIGR00200">
    <property type="entry name" value="cinA_nterm"/>
    <property type="match status" value="1"/>
</dbReference>
<dbReference type="NCBIfam" id="TIGR00199">
    <property type="entry name" value="PncC_domain"/>
    <property type="match status" value="1"/>
</dbReference>
<dbReference type="PANTHER" id="PTHR13939">
    <property type="entry name" value="NICOTINAMIDE-NUCLEOTIDE AMIDOHYDROLASE PNCC"/>
    <property type="match status" value="1"/>
</dbReference>
<dbReference type="PANTHER" id="PTHR13939:SF0">
    <property type="entry name" value="NMN AMIDOHYDROLASE-LIKE PROTEIN YFAY"/>
    <property type="match status" value="1"/>
</dbReference>
<dbReference type="Pfam" id="PF02464">
    <property type="entry name" value="CinA"/>
    <property type="match status" value="1"/>
</dbReference>
<dbReference type="Pfam" id="PF00994">
    <property type="entry name" value="MoCF_biosynth"/>
    <property type="match status" value="1"/>
</dbReference>
<dbReference type="PIRSF" id="PIRSF006728">
    <property type="entry name" value="CinA"/>
    <property type="match status" value="1"/>
</dbReference>
<dbReference type="SMART" id="SM00852">
    <property type="entry name" value="MoCF_biosynth"/>
    <property type="match status" value="1"/>
</dbReference>
<dbReference type="SUPFAM" id="SSF142433">
    <property type="entry name" value="CinA-like"/>
    <property type="match status" value="1"/>
</dbReference>
<dbReference type="SUPFAM" id="SSF53218">
    <property type="entry name" value="Molybdenum cofactor biosynthesis proteins"/>
    <property type="match status" value="1"/>
</dbReference>
<gene>
    <name type="ordered locus">Sbal195_4216</name>
</gene>
<reference key="1">
    <citation type="submission" date="2007-11" db="EMBL/GenBank/DDBJ databases">
        <title>Complete sequence of chromosome of Shewanella baltica OS195.</title>
        <authorList>
            <consortium name="US DOE Joint Genome Institute"/>
            <person name="Copeland A."/>
            <person name="Lucas S."/>
            <person name="Lapidus A."/>
            <person name="Barry K."/>
            <person name="Glavina del Rio T."/>
            <person name="Dalin E."/>
            <person name="Tice H."/>
            <person name="Pitluck S."/>
            <person name="Chain P."/>
            <person name="Malfatti S."/>
            <person name="Shin M."/>
            <person name="Vergez L."/>
            <person name="Schmutz J."/>
            <person name="Larimer F."/>
            <person name="Land M."/>
            <person name="Hauser L."/>
            <person name="Kyrpides N."/>
            <person name="Kim E."/>
            <person name="Brettar I."/>
            <person name="Rodrigues J."/>
            <person name="Konstantinidis K."/>
            <person name="Klappenbach J."/>
            <person name="Hofle M."/>
            <person name="Tiedje J."/>
            <person name="Richardson P."/>
        </authorList>
    </citation>
    <scope>NUCLEOTIDE SEQUENCE [LARGE SCALE GENOMIC DNA]</scope>
    <source>
        <strain>OS195</strain>
    </source>
</reference>
<protein>
    <recommendedName>
        <fullName evidence="1">CinA-like protein</fullName>
    </recommendedName>
</protein>
<evidence type="ECO:0000255" key="1">
    <source>
        <dbReference type="HAMAP-Rule" id="MF_00226"/>
    </source>
</evidence>
<comment type="similarity">
    <text evidence="1">Belongs to the CinA family.</text>
</comment>
<name>CINAL_SHEB9</name>